<sequence length="476" mass="53782">MDFEAVIGLEVHAELSTNTKIYCGCTTEFGGQPNTHVCPICLGLPGSLPQLNKRVVEYGIKAGLALNCSINKVCRMDRKNYFYPDCPKNYQITQDEVPICRDGYIEIELENGEKKKIGIERIHMEEDAGKLLHTNAGTLVDYNRAGVPLIEIVSRPDIRTPEEATKYLEKLKSILSSIEVSDCKMEQGSLRCDGNISVRPVGSEKFGVRSEIKNMNSFKALEKALSYEYDRHVEAVTKGEILEQETRRWDEANSVTVLMRSKEKANDYRYFPEGDLVTLNISDEWIEEVRKTIPELPHEKAERFVNEFGIPKYDAMVLTLTMDMAKFFEETAVKSEDAKAASNWLMGDISRLMNEKTIEVKDLKFNPEQLAQLIKLINARTISNNIGKKVLDDMFKSGKNPKDIVEEKGLVQNNDEGAILEVVKKIIENNPQSIEDFKNGKKRALGFLVGLVMKETKGKANPQIVNKLVSEEANKM</sequence>
<reference key="1">
    <citation type="submission" date="2008-05" db="EMBL/GenBank/DDBJ databases">
        <title>Genome sequence of Clostridium botulinum Ba4 strain 657.</title>
        <authorList>
            <person name="Shrivastava S."/>
            <person name="Brown J.L."/>
            <person name="Bruce D."/>
            <person name="Detter C."/>
            <person name="Munk C."/>
            <person name="Smith L.A."/>
            <person name="Smith T.J."/>
            <person name="Sutton G."/>
            <person name="Brettin T.S."/>
        </authorList>
    </citation>
    <scope>NUCLEOTIDE SEQUENCE [LARGE SCALE GENOMIC DNA]</scope>
    <source>
        <strain>657 / Type Ba4</strain>
    </source>
</reference>
<gene>
    <name evidence="1" type="primary">gatB</name>
    <name type="ordered locus">CLJ_B3546</name>
</gene>
<accession>C3KU96</accession>
<keyword id="KW-0067">ATP-binding</keyword>
<keyword id="KW-0436">Ligase</keyword>
<keyword id="KW-0547">Nucleotide-binding</keyword>
<keyword id="KW-0648">Protein biosynthesis</keyword>
<protein>
    <recommendedName>
        <fullName evidence="1">Aspartyl/glutamyl-tRNA(Asn/Gln) amidotransferase subunit B</fullName>
        <shortName evidence="1">Asp/Glu-ADT subunit B</shortName>
        <ecNumber evidence="1">6.3.5.-</ecNumber>
    </recommendedName>
</protein>
<name>GATB_CLOB6</name>
<evidence type="ECO:0000255" key="1">
    <source>
        <dbReference type="HAMAP-Rule" id="MF_00121"/>
    </source>
</evidence>
<proteinExistence type="inferred from homology"/>
<comment type="function">
    <text evidence="1">Allows the formation of correctly charged Asn-tRNA(Asn) or Gln-tRNA(Gln) through the transamidation of misacylated Asp-tRNA(Asn) or Glu-tRNA(Gln) in organisms which lack either or both of asparaginyl-tRNA or glutaminyl-tRNA synthetases. The reaction takes place in the presence of glutamine and ATP through an activated phospho-Asp-tRNA(Asn) or phospho-Glu-tRNA(Gln).</text>
</comment>
<comment type="catalytic activity">
    <reaction evidence="1">
        <text>L-glutamyl-tRNA(Gln) + L-glutamine + ATP + H2O = L-glutaminyl-tRNA(Gln) + L-glutamate + ADP + phosphate + H(+)</text>
        <dbReference type="Rhea" id="RHEA:17521"/>
        <dbReference type="Rhea" id="RHEA-COMP:9681"/>
        <dbReference type="Rhea" id="RHEA-COMP:9684"/>
        <dbReference type="ChEBI" id="CHEBI:15377"/>
        <dbReference type="ChEBI" id="CHEBI:15378"/>
        <dbReference type="ChEBI" id="CHEBI:29985"/>
        <dbReference type="ChEBI" id="CHEBI:30616"/>
        <dbReference type="ChEBI" id="CHEBI:43474"/>
        <dbReference type="ChEBI" id="CHEBI:58359"/>
        <dbReference type="ChEBI" id="CHEBI:78520"/>
        <dbReference type="ChEBI" id="CHEBI:78521"/>
        <dbReference type="ChEBI" id="CHEBI:456216"/>
    </reaction>
</comment>
<comment type="catalytic activity">
    <reaction evidence="1">
        <text>L-aspartyl-tRNA(Asn) + L-glutamine + ATP + H2O = L-asparaginyl-tRNA(Asn) + L-glutamate + ADP + phosphate + 2 H(+)</text>
        <dbReference type="Rhea" id="RHEA:14513"/>
        <dbReference type="Rhea" id="RHEA-COMP:9674"/>
        <dbReference type="Rhea" id="RHEA-COMP:9677"/>
        <dbReference type="ChEBI" id="CHEBI:15377"/>
        <dbReference type="ChEBI" id="CHEBI:15378"/>
        <dbReference type="ChEBI" id="CHEBI:29985"/>
        <dbReference type="ChEBI" id="CHEBI:30616"/>
        <dbReference type="ChEBI" id="CHEBI:43474"/>
        <dbReference type="ChEBI" id="CHEBI:58359"/>
        <dbReference type="ChEBI" id="CHEBI:78515"/>
        <dbReference type="ChEBI" id="CHEBI:78516"/>
        <dbReference type="ChEBI" id="CHEBI:456216"/>
    </reaction>
</comment>
<comment type="subunit">
    <text evidence="1">Heterotrimer of A, B and C subunits.</text>
</comment>
<comment type="similarity">
    <text evidence="1">Belongs to the GatB/GatE family. GatB subfamily.</text>
</comment>
<dbReference type="EC" id="6.3.5.-" evidence="1"/>
<dbReference type="EMBL" id="CP001083">
    <property type="protein sequence ID" value="ACQ51614.1"/>
    <property type="molecule type" value="Genomic_DNA"/>
</dbReference>
<dbReference type="RefSeq" id="WP_003361674.1">
    <property type="nucleotide sequence ID" value="NC_012658.1"/>
</dbReference>
<dbReference type="SMR" id="C3KU96"/>
<dbReference type="KEGG" id="cbi:CLJ_B3546"/>
<dbReference type="HOGENOM" id="CLU_019240_0_0_9"/>
<dbReference type="Proteomes" id="UP000002333">
    <property type="component" value="Chromosome"/>
</dbReference>
<dbReference type="GO" id="GO:0050566">
    <property type="term" value="F:asparaginyl-tRNA synthase (glutamine-hydrolyzing) activity"/>
    <property type="evidence" value="ECO:0007669"/>
    <property type="project" value="RHEA"/>
</dbReference>
<dbReference type="GO" id="GO:0005524">
    <property type="term" value="F:ATP binding"/>
    <property type="evidence" value="ECO:0007669"/>
    <property type="project" value="UniProtKB-KW"/>
</dbReference>
<dbReference type="GO" id="GO:0050567">
    <property type="term" value="F:glutaminyl-tRNA synthase (glutamine-hydrolyzing) activity"/>
    <property type="evidence" value="ECO:0007669"/>
    <property type="project" value="UniProtKB-UniRule"/>
</dbReference>
<dbReference type="GO" id="GO:0070681">
    <property type="term" value="P:glutaminyl-tRNAGln biosynthesis via transamidation"/>
    <property type="evidence" value="ECO:0007669"/>
    <property type="project" value="TreeGrafter"/>
</dbReference>
<dbReference type="GO" id="GO:0006412">
    <property type="term" value="P:translation"/>
    <property type="evidence" value="ECO:0007669"/>
    <property type="project" value="UniProtKB-UniRule"/>
</dbReference>
<dbReference type="FunFam" id="1.10.10.410:FF:000001">
    <property type="entry name" value="Aspartyl/glutamyl-tRNA(Asn/Gln) amidotransferase subunit B"/>
    <property type="match status" value="1"/>
</dbReference>
<dbReference type="FunFam" id="1.10.150.380:FF:000001">
    <property type="entry name" value="Aspartyl/glutamyl-tRNA(Asn/Gln) amidotransferase subunit B"/>
    <property type="match status" value="1"/>
</dbReference>
<dbReference type="Gene3D" id="1.10.10.410">
    <property type="match status" value="1"/>
</dbReference>
<dbReference type="Gene3D" id="1.10.150.380">
    <property type="entry name" value="GatB domain, N-terminal subdomain"/>
    <property type="match status" value="1"/>
</dbReference>
<dbReference type="HAMAP" id="MF_00121">
    <property type="entry name" value="GatB"/>
    <property type="match status" value="1"/>
</dbReference>
<dbReference type="InterPro" id="IPR017959">
    <property type="entry name" value="Asn/Gln-tRNA_amidoTrfase_suB/E"/>
</dbReference>
<dbReference type="InterPro" id="IPR006075">
    <property type="entry name" value="Asn/Gln-tRNA_Trfase_suB/E_cat"/>
</dbReference>
<dbReference type="InterPro" id="IPR018027">
    <property type="entry name" value="Asn/Gln_amidotransferase"/>
</dbReference>
<dbReference type="InterPro" id="IPR003789">
    <property type="entry name" value="Asn/Gln_tRNA_amidoTrase-B-like"/>
</dbReference>
<dbReference type="InterPro" id="IPR004413">
    <property type="entry name" value="GatB"/>
</dbReference>
<dbReference type="InterPro" id="IPR042114">
    <property type="entry name" value="GatB_C_1"/>
</dbReference>
<dbReference type="InterPro" id="IPR023168">
    <property type="entry name" value="GatB_Yqey_C_2"/>
</dbReference>
<dbReference type="InterPro" id="IPR017958">
    <property type="entry name" value="Gln-tRNA_amidoTrfase_suB_CS"/>
</dbReference>
<dbReference type="InterPro" id="IPR014746">
    <property type="entry name" value="Gln_synth/guanido_kin_cat_dom"/>
</dbReference>
<dbReference type="NCBIfam" id="TIGR00133">
    <property type="entry name" value="gatB"/>
    <property type="match status" value="1"/>
</dbReference>
<dbReference type="NCBIfam" id="NF004012">
    <property type="entry name" value="PRK05477.1-2"/>
    <property type="match status" value="1"/>
</dbReference>
<dbReference type="NCBIfam" id="NF004014">
    <property type="entry name" value="PRK05477.1-4"/>
    <property type="match status" value="1"/>
</dbReference>
<dbReference type="PANTHER" id="PTHR11659">
    <property type="entry name" value="GLUTAMYL-TRNA GLN AMIDOTRANSFERASE SUBUNIT B MITOCHONDRIAL AND PROKARYOTIC PET112-RELATED"/>
    <property type="match status" value="1"/>
</dbReference>
<dbReference type="PANTHER" id="PTHR11659:SF0">
    <property type="entry name" value="GLUTAMYL-TRNA(GLN) AMIDOTRANSFERASE SUBUNIT B, MITOCHONDRIAL"/>
    <property type="match status" value="1"/>
</dbReference>
<dbReference type="Pfam" id="PF02934">
    <property type="entry name" value="GatB_N"/>
    <property type="match status" value="1"/>
</dbReference>
<dbReference type="Pfam" id="PF02637">
    <property type="entry name" value="GatB_Yqey"/>
    <property type="match status" value="1"/>
</dbReference>
<dbReference type="SMART" id="SM00845">
    <property type="entry name" value="GatB_Yqey"/>
    <property type="match status" value="1"/>
</dbReference>
<dbReference type="SUPFAM" id="SSF89095">
    <property type="entry name" value="GatB/YqeY motif"/>
    <property type="match status" value="1"/>
</dbReference>
<dbReference type="SUPFAM" id="SSF55931">
    <property type="entry name" value="Glutamine synthetase/guanido kinase"/>
    <property type="match status" value="1"/>
</dbReference>
<dbReference type="PROSITE" id="PS01234">
    <property type="entry name" value="GATB"/>
    <property type="match status" value="1"/>
</dbReference>
<organism>
    <name type="scientific">Clostridium botulinum (strain 657 / Type Ba4)</name>
    <dbReference type="NCBI Taxonomy" id="515621"/>
    <lineage>
        <taxon>Bacteria</taxon>
        <taxon>Bacillati</taxon>
        <taxon>Bacillota</taxon>
        <taxon>Clostridia</taxon>
        <taxon>Eubacteriales</taxon>
        <taxon>Clostridiaceae</taxon>
        <taxon>Clostridium</taxon>
    </lineage>
</organism>
<feature type="chain" id="PRO_1000203049" description="Aspartyl/glutamyl-tRNA(Asn/Gln) amidotransferase subunit B">
    <location>
        <begin position="1"/>
        <end position="476"/>
    </location>
</feature>